<organism>
    <name type="scientific">Leptospira biflexa serovar Patoc (strain Patoc 1 / Ames)</name>
    <dbReference type="NCBI Taxonomy" id="355278"/>
    <lineage>
        <taxon>Bacteria</taxon>
        <taxon>Pseudomonadati</taxon>
        <taxon>Spirochaetota</taxon>
        <taxon>Spirochaetia</taxon>
        <taxon>Leptospirales</taxon>
        <taxon>Leptospiraceae</taxon>
        <taxon>Leptospira</taxon>
    </lineage>
</organism>
<accession>B0SA33</accession>
<proteinExistence type="inferred from homology"/>
<dbReference type="EMBL" id="CP000777">
    <property type="protein sequence ID" value="ABZ94403.1"/>
    <property type="molecule type" value="Genomic_DNA"/>
</dbReference>
<dbReference type="RefSeq" id="WP_002973604.1">
    <property type="nucleotide sequence ID" value="NC_010842.1"/>
</dbReference>
<dbReference type="SMR" id="B0SA33"/>
<dbReference type="GeneID" id="93343063"/>
<dbReference type="KEGG" id="lbf:LBF_1899"/>
<dbReference type="HOGENOM" id="CLU_098428_0_2_12"/>
<dbReference type="GO" id="GO:1990904">
    <property type="term" value="C:ribonucleoprotein complex"/>
    <property type="evidence" value="ECO:0007669"/>
    <property type="project" value="UniProtKB-KW"/>
</dbReference>
<dbReference type="GO" id="GO:0005840">
    <property type="term" value="C:ribosome"/>
    <property type="evidence" value="ECO:0007669"/>
    <property type="project" value="UniProtKB-KW"/>
</dbReference>
<dbReference type="GO" id="GO:0019843">
    <property type="term" value="F:rRNA binding"/>
    <property type="evidence" value="ECO:0007669"/>
    <property type="project" value="UniProtKB-UniRule"/>
</dbReference>
<dbReference type="GO" id="GO:0003735">
    <property type="term" value="F:structural constituent of ribosome"/>
    <property type="evidence" value="ECO:0007669"/>
    <property type="project" value="InterPro"/>
</dbReference>
<dbReference type="GO" id="GO:0006412">
    <property type="term" value="P:translation"/>
    <property type="evidence" value="ECO:0007669"/>
    <property type="project" value="UniProtKB-UniRule"/>
</dbReference>
<dbReference type="FunFam" id="3.30.1370.30:FF:000002">
    <property type="entry name" value="30S ribosomal protein S8"/>
    <property type="match status" value="1"/>
</dbReference>
<dbReference type="FunFam" id="3.30.1490.10:FF:000001">
    <property type="entry name" value="30S ribosomal protein S8"/>
    <property type="match status" value="1"/>
</dbReference>
<dbReference type="Gene3D" id="3.30.1370.30">
    <property type="match status" value="1"/>
</dbReference>
<dbReference type="Gene3D" id="3.30.1490.10">
    <property type="match status" value="1"/>
</dbReference>
<dbReference type="HAMAP" id="MF_01302_B">
    <property type="entry name" value="Ribosomal_uS8_B"/>
    <property type="match status" value="1"/>
</dbReference>
<dbReference type="InterPro" id="IPR000630">
    <property type="entry name" value="Ribosomal_uS8"/>
</dbReference>
<dbReference type="InterPro" id="IPR047863">
    <property type="entry name" value="Ribosomal_uS8_CS"/>
</dbReference>
<dbReference type="InterPro" id="IPR035987">
    <property type="entry name" value="Ribosomal_uS8_sf"/>
</dbReference>
<dbReference type="NCBIfam" id="NF001109">
    <property type="entry name" value="PRK00136.1"/>
    <property type="match status" value="1"/>
</dbReference>
<dbReference type="PANTHER" id="PTHR11758">
    <property type="entry name" value="40S RIBOSOMAL PROTEIN S15A"/>
    <property type="match status" value="1"/>
</dbReference>
<dbReference type="Pfam" id="PF00410">
    <property type="entry name" value="Ribosomal_S8"/>
    <property type="match status" value="1"/>
</dbReference>
<dbReference type="SUPFAM" id="SSF56047">
    <property type="entry name" value="Ribosomal protein S8"/>
    <property type="match status" value="1"/>
</dbReference>
<dbReference type="PROSITE" id="PS00053">
    <property type="entry name" value="RIBOSOMAL_S8"/>
    <property type="match status" value="1"/>
</dbReference>
<protein>
    <recommendedName>
        <fullName evidence="1">Small ribosomal subunit protein uS8</fullName>
    </recommendedName>
    <alternativeName>
        <fullName evidence="2">30S ribosomal protein S8</fullName>
    </alternativeName>
</protein>
<name>RS8_LEPBA</name>
<gene>
    <name evidence="1" type="primary">rpsH</name>
    <name type="ordered locus">LBF_1899</name>
</gene>
<evidence type="ECO:0000255" key="1">
    <source>
        <dbReference type="HAMAP-Rule" id="MF_01302"/>
    </source>
</evidence>
<evidence type="ECO:0000305" key="2"/>
<keyword id="KW-0687">Ribonucleoprotein</keyword>
<keyword id="KW-0689">Ribosomal protein</keyword>
<keyword id="KW-0694">RNA-binding</keyword>
<keyword id="KW-0699">rRNA-binding</keyword>
<sequence>MSLSDPIADMLTRIRNAQQAKHELCVIPGSKIKKSILDLLKEEGFVDDVQTVKNGSFDDFQVKLKYDTEKKPVIRMIERVSTPGRRVYIQSGEIRPFRNNIGTLILSTSKGVMTGKRARKLRVGGEVLCKVF</sequence>
<comment type="function">
    <text evidence="1">One of the primary rRNA binding proteins, it binds directly to 16S rRNA central domain where it helps coordinate assembly of the platform of the 30S subunit.</text>
</comment>
<comment type="subunit">
    <text evidence="1">Part of the 30S ribosomal subunit. Contacts proteins S5 and S12.</text>
</comment>
<comment type="similarity">
    <text evidence="1">Belongs to the universal ribosomal protein uS8 family.</text>
</comment>
<reference key="1">
    <citation type="journal article" date="2008" name="PLoS ONE">
        <title>Genome sequence of the saprophyte Leptospira biflexa provides insights into the evolution of Leptospira and the pathogenesis of leptospirosis.</title>
        <authorList>
            <person name="Picardeau M."/>
            <person name="Bulach D.M."/>
            <person name="Bouchier C."/>
            <person name="Zuerner R.L."/>
            <person name="Zidane N."/>
            <person name="Wilson P.J."/>
            <person name="Creno S."/>
            <person name="Kuczek E.S."/>
            <person name="Bommezzadri S."/>
            <person name="Davis J.C."/>
            <person name="McGrath A."/>
            <person name="Johnson M.J."/>
            <person name="Boursaux-Eude C."/>
            <person name="Seemann T."/>
            <person name="Rouy Z."/>
            <person name="Coppel R.L."/>
            <person name="Rood J.I."/>
            <person name="Lajus A."/>
            <person name="Davies J.K."/>
            <person name="Medigue C."/>
            <person name="Adler B."/>
        </authorList>
    </citation>
    <scope>NUCLEOTIDE SEQUENCE [LARGE SCALE GENOMIC DNA]</scope>
    <source>
        <strain>Patoc 1 / Ames</strain>
    </source>
</reference>
<feature type="chain" id="PRO_1000140574" description="Small ribosomal subunit protein uS8">
    <location>
        <begin position="1"/>
        <end position="132"/>
    </location>
</feature>